<keyword id="KW-0238">DNA-binding</keyword>
<keyword id="KW-1185">Reference proteome</keyword>
<sequence length="88" mass="9694">MLEDTTIHNAITDKALASYFRSSGNLLEEESAVLGQAVTNLMLSGDNVNNKNIILSLIHSLETTSDILKADVIRKTLEIVLRYTADDM</sequence>
<organism>
    <name type="scientific">Escherichia coli O139:H28 (strain E24377A / ETEC)</name>
    <dbReference type="NCBI Taxonomy" id="331111"/>
    <lineage>
        <taxon>Bacteria</taxon>
        <taxon>Pseudomonadati</taxon>
        <taxon>Pseudomonadota</taxon>
        <taxon>Gammaproteobacteria</taxon>
        <taxon>Enterobacterales</taxon>
        <taxon>Enterobacteriaceae</taxon>
        <taxon>Escherichia</taxon>
    </lineage>
</organism>
<gene>
    <name type="primary">ariR</name>
    <name type="ordered locus">EcE24377A_1305</name>
</gene>
<proteinExistence type="inferred from homology"/>
<dbReference type="EMBL" id="CP000800">
    <property type="protein sequence ID" value="ABV17372.1"/>
    <property type="molecule type" value="Genomic_DNA"/>
</dbReference>
<dbReference type="RefSeq" id="WP_000888772.1">
    <property type="nucleotide sequence ID" value="NC_009801.1"/>
</dbReference>
<dbReference type="SMR" id="A7ZKT2"/>
<dbReference type="GeneID" id="75203729"/>
<dbReference type="KEGG" id="ecw:EcE24377A_1305"/>
<dbReference type="HOGENOM" id="CLU_164045_1_0_6"/>
<dbReference type="Proteomes" id="UP000001122">
    <property type="component" value="Chromosome"/>
</dbReference>
<dbReference type="GO" id="GO:0003677">
    <property type="term" value="F:DNA binding"/>
    <property type="evidence" value="ECO:0007669"/>
    <property type="project" value="UniProtKB-KW"/>
</dbReference>
<dbReference type="GO" id="GO:0071468">
    <property type="term" value="P:cellular response to acidic pH"/>
    <property type="evidence" value="ECO:0007669"/>
    <property type="project" value="InterPro"/>
</dbReference>
<dbReference type="FunFam" id="1.20.5.5260:FF:000001">
    <property type="entry name" value="Two-component-system connector protein AriR"/>
    <property type="match status" value="1"/>
</dbReference>
<dbReference type="Gene3D" id="1.20.5.5260">
    <property type="match status" value="1"/>
</dbReference>
<dbReference type="InterPro" id="IPR024753">
    <property type="entry name" value="AriR"/>
</dbReference>
<dbReference type="Pfam" id="PF10798">
    <property type="entry name" value="YmgB"/>
    <property type="match status" value="1"/>
</dbReference>
<protein>
    <recommendedName>
        <fullName>Regulatory protein AriR</fullName>
    </recommendedName>
</protein>
<reference key="1">
    <citation type="journal article" date="2008" name="J. Bacteriol.">
        <title>The pangenome structure of Escherichia coli: comparative genomic analysis of E. coli commensal and pathogenic isolates.</title>
        <authorList>
            <person name="Rasko D.A."/>
            <person name="Rosovitz M.J."/>
            <person name="Myers G.S.A."/>
            <person name="Mongodin E.F."/>
            <person name="Fricke W.F."/>
            <person name="Gajer P."/>
            <person name="Crabtree J."/>
            <person name="Sebaihia M."/>
            <person name="Thomson N.R."/>
            <person name="Chaudhuri R."/>
            <person name="Henderson I.R."/>
            <person name="Sperandio V."/>
            <person name="Ravel J."/>
        </authorList>
    </citation>
    <scope>NUCLEOTIDE SEQUENCE [LARGE SCALE GENOMIC DNA]</scope>
    <source>
        <strain>E24377A / ETEC</strain>
    </source>
</reference>
<accession>A7ZKT2</accession>
<evidence type="ECO:0000250" key="1"/>
<evidence type="ECO:0000305" key="2"/>
<comment type="function">
    <text evidence="1">Regulates expression of genes involved in acid-resistance and biofilm formation. May be a non-specific DNA-binding protein that binds genes and/or intergenic regions via a geometric recognition (By similarity).</text>
</comment>
<comment type="subunit">
    <text evidence="1">Homodimer.</text>
</comment>
<comment type="similarity">
    <text evidence="2">Belongs to the AriR family.</text>
</comment>
<name>ARIR_ECO24</name>
<feature type="chain" id="PRO_0000350558" description="Regulatory protein AriR">
    <location>
        <begin position="1"/>
        <end position="88"/>
    </location>
</feature>